<accession>C5BQB2</accession>
<organism>
    <name type="scientific">Teredinibacter turnerae (strain ATCC 39867 / T7901)</name>
    <dbReference type="NCBI Taxonomy" id="377629"/>
    <lineage>
        <taxon>Bacteria</taxon>
        <taxon>Pseudomonadati</taxon>
        <taxon>Pseudomonadota</taxon>
        <taxon>Gammaproteobacteria</taxon>
        <taxon>Cellvibrionales</taxon>
        <taxon>Cellvibrionaceae</taxon>
        <taxon>Teredinibacter</taxon>
    </lineage>
</organism>
<protein>
    <recommendedName>
        <fullName evidence="1">Large ribosomal subunit protein bL21</fullName>
    </recommendedName>
    <alternativeName>
        <fullName evidence="2">50S ribosomal protein L21</fullName>
    </alternativeName>
</protein>
<gene>
    <name evidence="1" type="primary">rplU</name>
    <name type="ordered locus">TERTU_0960</name>
</gene>
<feature type="chain" id="PRO_1000214903" description="Large ribosomal subunit protein bL21">
    <location>
        <begin position="1"/>
        <end position="103"/>
    </location>
</feature>
<reference key="1">
    <citation type="journal article" date="2009" name="PLoS ONE">
        <title>The complete genome of Teredinibacter turnerae T7901: an intracellular endosymbiont of marine wood-boring bivalves (shipworms).</title>
        <authorList>
            <person name="Yang J.C."/>
            <person name="Madupu R."/>
            <person name="Durkin A.S."/>
            <person name="Ekborg N.A."/>
            <person name="Pedamallu C.S."/>
            <person name="Hostetler J.B."/>
            <person name="Radune D."/>
            <person name="Toms B.S."/>
            <person name="Henrissat B."/>
            <person name="Coutinho P.M."/>
            <person name="Schwarz S."/>
            <person name="Field L."/>
            <person name="Trindade-Silva A.E."/>
            <person name="Soares C.A.G."/>
            <person name="Elshahawi S."/>
            <person name="Hanora A."/>
            <person name="Schmidt E.W."/>
            <person name="Haygood M.G."/>
            <person name="Posfai J."/>
            <person name="Benner J."/>
            <person name="Madinger C."/>
            <person name="Nove J."/>
            <person name="Anton B."/>
            <person name="Chaudhary K."/>
            <person name="Foster J."/>
            <person name="Holman A."/>
            <person name="Kumar S."/>
            <person name="Lessard P.A."/>
            <person name="Luyten Y.A."/>
            <person name="Slatko B."/>
            <person name="Wood N."/>
            <person name="Wu B."/>
            <person name="Teplitski M."/>
            <person name="Mougous J.D."/>
            <person name="Ward N."/>
            <person name="Eisen J.A."/>
            <person name="Badger J.H."/>
            <person name="Distel D.L."/>
        </authorList>
    </citation>
    <scope>NUCLEOTIDE SEQUENCE [LARGE SCALE GENOMIC DNA]</scope>
    <source>
        <strain>ATCC 39867 / T7901</strain>
    </source>
</reference>
<proteinExistence type="inferred from homology"/>
<name>RL21_TERTT</name>
<sequence>MYAVIAAGGKQHRVEEGEVLRLEKIEVATGETVDFDQVLLVGSGADVKIGTPVVEGAKVTAEVVSHGRADKVTIIKFKRRKHHMKRQGHRQWYTEVKITGIQG</sequence>
<keyword id="KW-1185">Reference proteome</keyword>
<keyword id="KW-0687">Ribonucleoprotein</keyword>
<keyword id="KW-0689">Ribosomal protein</keyword>
<keyword id="KW-0694">RNA-binding</keyword>
<keyword id="KW-0699">rRNA-binding</keyword>
<dbReference type="EMBL" id="CP001614">
    <property type="protein sequence ID" value="ACR12523.1"/>
    <property type="molecule type" value="Genomic_DNA"/>
</dbReference>
<dbReference type="RefSeq" id="WP_015818635.1">
    <property type="nucleotide sequence ID" value="NC_012997.1"/>
</dbReference>
<dbReference type="SMR" id="C5BQB2"/>
<dbReference type="STRING" id="377629.TERTU_0960"/>
<dbReference type="GeneID" id="58408732"/>
<dbReference type="GeneID" id="93857692"/>
<dbReference type="KEGG" id="ttu:TERTU_0960"/>
<dbReference type="eggNOG" id="COG0261">
    <property type="taxonomic scope" value="Bacteria"/>
</dbReference>
<dbReference type="HOGENOM" id="CLU_061463_3_2_6"/>
<dbReference type="OrthoDB" id="9813334at2"/>
<dbReference type="Proteomes" id="UP000009080">
    <property type="component" value="Chromosome"/>
</dbReference>
<dbReference type="GO" id="GO:0005737">
    <property type="term" value="C:cytoplasm"/>
    <property type="evidence" value="ECO:0007669"/>
    <property type="project" value="UniProtKB-ARBA"/>
</dbReference>
<dbReference type="GO" id="GO:1990904">
    <property type="term" value="C:ribonucleoprotein complex"/>
    <property type="evidence" value="ECO:0007669"/>
    <property type="project" value="UniProtKB-KW"/>
</dbReference>
<dbReference type="GO" id="GO:0005840">
    <property type="term" value="C:ribosome"/>
    <property type="evidence" value="ECO:0007669"/>
    <property type="project" value="UniProtKB-KW"/>
</dbReference>
<dbReference type="GO" id="GO:0019843">
    <property type="term" value="F:rRNA binding"/>
    <property type="evidence" value="ECO:0007669"/>
    <property type="project" value="UniProtKB-UniRule"/>
</dbReference>
<dbReference type="GO" id="GO:0003735">
    <property type="term" value="F:structural constituent of ribosome"/>
    <property type="evidence" value="ECO:0007669"/>
    <property type="project" value="InterPro"/>
</dbReference>
<dbReference type="GO" id="GO:0006412">
    <property type="term" value="P:translation"/>
    <property type="evidence" value="ECO:0007669"/>
    <property type="project" value="UniProtKB-UniRule"/>
</dbReference>
<dbReference type="HAMAP" id="MF_01363">
    <property type="entry name" value="Ribosomal_bL21"/>
    <property type="match status" value="1"/>
</dbReference>
<dbReference type="InterPro" id="IPR028909">
    <property type="entry name" value="bL21-like"/>
</dbReference>
<dbReference type="InterPro" id="IPR036164">
    <property type="entry name" value="bL21-like_sf"/>
</dbReference>
<dbReference type="InterPro" id="IPR001787">
    <property type="entry name" value="Ribosomal_bL21"/>
</dbReference>
<dbReference type="InterPro" id="IPR018258">
    <property type="entry name" value="Ribosomal_bL21_CS"/>
</dbReference>
<dbReference type="NCBIfam" id="TIGR00061">
    <property type="entry name" value="L21"/>
    <property type="match status" value="1"/>
</dbReference>
<dbReference type="PANTHER" id="PTHR21349">
    <property type="entry name" value="50S RIBOSOMAL PROTEIN L21"/>
    <property type="match status" value="1"/>
</dbReference>
<dbReference type="PANTHER" id="PTHR21349:SF0">
    <property type="entry name" value="LARGE RIBOSOMAL SUBUNIT PROTEIN BL21M"/>
    <property type="match status" value="1"/>
</dbReference>
<dbReference type="Pfam" id="PF00829">
    <property type="entry name" value="Ribosomal_L21p"/>
    <property type="match status" value="1"/>
</dbReference>
<dbReference type="SUPFAM" id="SSF141091">
    <property type="entry name" value="L21p-like"/>
    <property type="match status" value="1"/>
</dbReference>
<dbReference type="PROSITE" id="PS01169">
    <property type="entry name" value="RIBOSOMAL_L21"/>
    <property type="match status" value="1"/>
</dbReference>
<evidence type="ECO:0000255" key="1">
    <source>
        <dbReference type="HAMAP-Rule" id="MF_01363"/>
    </source>
</evidence>
<evidence type="ECO:0000305" key="2"/>
<comment type="function">
    <text evidence="1">This protein binds to 23S rRNA in the presence of protein L20.</text>
</comment>
<comment type="subunit">
    <text evidence="1">Part of the 50S ribosomal subunit. Contacts protein L20.</text>
</comment>
<comment type="similarity">
    <text evidence="1">Belongs to the bacterial ribosomal protein bL21 family.</text>
</comment>